<gene>
    <name evidence="21" type="primary">bla</name>
    <name evidence="21" type="synonym">blaSHV-1</name>
    <name evidence="23" type="synonym">shv1</name>
</gene>
<protein>
    <recommendedName>
        <fullName evidence="21">Beta-lactamase SHV-1</fullName>
        <ecNumber evidence="4 10 14 17">3.5.2.6</ecNumber>
    </recommendedName>
    <alternativeName>
        <fullName evidence="24">PIT-2</fullName>
    </alternativeName>
    <alternativeName>
        <fullName evidence="23">Sulfhydryl reagent variable 1</fullName>
    </alternativeName>
</protein>
<evidence type="ECO:0000250" key="1">
    <source>
        <dbReference type="UniProtKB" id="A0A5R8T042"/>
    </source>
</evidence>
<evidence type="ECO:0000255" key="2"/>
<evidence type="ECO:0000255" key="3">
    <source>
        <dbReference type="PROSITE-ProRule" id="PRU10101"/>
    </source>
</evidence>
<evidence type="ECO:0000269" key="4">
    <source>
    </source>
</evidence>
<evidence type="ECO:0000269" key="5">
    <source>
    </source>
</evidence>
<evidence type="ECO:0000269" key="6">
    <source>
    </source>
</evidence>
<evidence type="ECO:0000269" key="7">
    <source>
    </source>
</evidence>
<evidence type="ECO:0000269" key="8">
    <source>
    </source>
</evidence>
<evidence type="ECO:0000269" key="9">
    <source>
    </source>
</evidence>
<evidence type="ECO:0000269" key="10">
    <source>
    </source>
</evidence>
<evidence type="ECO:0000269" key="11">
    <source>
    </source>
</evidence>
<evidence type="ECO:0000269" key="12">
    <source>
    </source>
</evidence>
<evidence type="ECO:0000269" key="13">
    <source>
    </source>
</evidence>
<evidence type="ECO:0000269" key="14">
    <source>
    </source>
</evidence>
<evidence type="ECO:0000269" key="15">
    <source>
    </source>
</evidence>
<evidence type="ECO:0000269" key="16">
    <source>
    </source>
</evidence>
<evidence type="ECO:0000269" key="17">
    <source>
    </source>
</evidence>
<evidence type="ECO:0000269" key="18">
    <source>
    </source>
</evidence>
<evidence type="ECO:0000269" key="19">
    <source>
    </source>
</evidence>
<evidence type="ECO:0000303" key="20">
    <source>
    </source>
</evidence>
<evidence type="ECO:0000303" key="21">
    <source>
    </source>
</evidence>
<evidence type="ECO:0000303" key="22">
    <source>
    </source>
</evidence>
<evidence type="ECO:0000305" key="23"/>
<evidence type="ECO:0000305" key="24">
    <source>
    </source>
</evidence>
<evidence type="ECO:0007744" key="25">
    <source>
        <dbReference type="PDB" id="1ONG"/>
    </source>
</evidence>
<evidence type="ECO:0007744" key="26">
    <source>
        <dbReference type="PDB" id="1Q2P"/>
    </source>
</evidence>
<evidence type="ECO:0007744" key="27">
    <source>
        <dbReference type="PDB" id="1RCJ"/>
    </source>
</evidence>
<evidence type="ECO:0007744" key="28">
    <source>
        <dbReference type="PDB" id="1TDG"/>
    </source>
</evidence>
<evidence type="ECO:0007744" key="29">
    <source>
        <dbReference type="PDB" id="1TDL"/>
    </source>
</evidence>
<evidence type="ECO:0007744" key="30">
    <source>
        <dbReference type="PDB" id="1VM1"/>
    </source>
</evidence>
<evidence type="ECO:0007744" key="31">
    <source>
        <dbReference type="PDB" id="2A3U"/>
    </source>
</evidence>
<evidence type="ECO:0007744" key="32">
    <source>
        <dbReference type="PDB" id="2A49"/>
    </source>
</evidence>
<evidence type="ECO:0007744" key="33">
    <source>
        <dbReference type="PDB" id="2G2U"/>
    </source>
</evidence>
<evidence type="ECO:0007744" key="34">
    <source>
        <dbReference type="PDB" id="2G2W"/>
    </source>
</evidence>
<evidence type="ECO:0007744" key="35">
    <source>
        <dbReference type="PDB" id="2H0T"/>
    </source>
</evidence>
<evidence type="ECO:0007744" key="36">
    <source>
        <dbReference type="PDB" id="2H0Y"/>
    </source>
</evidence>
<evidence type="ECO:0007744" key="37">
    <source>
        <dbReference type="PDB" id="2H10"/>
    </source>
</evidence>
<evidence type="ECO:0007744" key="38">
    <source>
        <dbReference type="PDB" id="2H5S"/>
    </source>
</evidence>
<evidence type="ECO:0007744" key="39">
    <source>
        <dbReference type="PDB" id="2ZD8"/>
    </source>
</evidence>
<evidence type="ECO:0007744" key="40">
    <source>
        <dbReference type="PDB" id="3C4O"/>
    </source>
</evidence>
<evidence type="ECO:0007744" key="41">
    <source>
        <dbReference type="PDB" id="3C4P"/>
    </source>
</evidence>
<evidence type="ECO:0007744" key="42">
    <source>
        <dbReference type="PDB" id="3D4F"/>
    </source>
</evidence>
<evidence type="ECO:0007744" key="43">
    <source>
        <dbReference type="PDB" id="3MKE"/>
    </source>
</evidence>
<evidence type="ECO:0007744" key="44">
    <source>
        <dbReference type="PDB" id="3MKF"/>
    </source>
</evidence>
<evidence type="ECO:0007744" key="45">
    <source>
        <dbReference type="PDB" id="3MXR"/>
    </source>
</evidence>
<evidence type="ECO:0007744" key="46">
    <source>
        <dbReference type="PDB" id="3MXS"/>
    </source>
</evidence>
<evidence type="ECO:0007744" key="47">
    <source>
        <dbReference type="PDB" id="3N4I"/>
    </source>
</evidence>
<evidence type="ECO:0007744" key="48">
    <source>
        <dbReference type="PDB" id="3OPH"/>
    </source>
</evidence>
<evidence type="ECO:0007744" key="49">
    <source>
        <dbReference type="PDB" id="3OPL"/>
    </source>
</evidence>
<evidence type="ECO:0007744" key="50">
    <source>
        <dbReference type="PDB" id="3OPP"/>
    </source>
</evidence>
<evidence type="ECO:0007744" key="51">
    <source>
        <dbReference type="PDB" id="3OPR"/>
    </source>
</evidence>
<evidence type="ECO:0007744" key="52">
    <source>
        <dbReference type="PDB" id="3V50"/>
    </source>
</evidence>
<evidence type="ECO:0007744" key="53">
    <source>
        <dbReference type="PDB" id="3V5M"/>
    </source>
</evidence>
<evidence type="ECO:0007744" key="54">
    <source>
        <dbReference type="PDB" id="4FCF"/>
    </source>
</evidence>
<evidence type="ECO:0007744" key="55">
    <source>
        <dbReference type="PDB" id="4FD8"/>
    </source>
</evidence>
<evidence type="ECO:0007744" key="56">
    <source>
        <dbReference type="PDB" id="4FH2"/>
    </source>
</evidence>
<evidence type="ECO:0007744" key="57">
    <source>
        <dbReference type="PDB" id="4FH4"/>
    </source>
</evidence>
<evidence type="ECO:0007744" key="58">
    <source>
        <dbReference type="PDB" id="4GD6"/>
    </source>
</evidence>
<evidence type="ECO:0007744" key="59">
    <source>
        <dbReference type="PDB" id="4GD8"/>
    </source>
</evidence>
<evidence type="ECO:0007744" key="60">
    <source>
        <dbReference type="PDB" id="4GDB"/>
    </source>
</evidence>
<evidence type="ECO:0007744" key="61">
    <source>
        <dbReference type="PDB" id="4JPM"/>
    </source>
</evidence>
<evidence type="ECO:0007744" key="62">
    <source>
        <dbReference type="PDB" id="4MBF"/>
    </source>
</evidence>
<evidence type="ECO:0007744" key="63">
    <source>
        <dbReference type="PDB" id="4MBH"/>
    </source>
</evidence>
<evidence type="ECO:0007744" key="64">
    <source>
        <dbReference type="PDB" id="4MBK"/>
    </source>
</evidence>
<evidence type="ECO:0007744" key="65">
    <source>
        <dbReference type="PDB" id="4R3B"/>
    </source>
</evidence>
<evidence type="ECO:0007744" key="66">
    <source>
        <dbReference type="PDB" id="4ZAM"/>
    </source>
</evidence>
<evidence type="ECO:0007744" key="67">
    <source>
        <dbReference type="PDB" id="5EE8"/>
    </source>
</evidence>
<evidence type="ECO:0007829" key="68">
    <source>
        <dbReference type="PDB" id="2ZD8"/>
    </source>
</evidence>
<evidence type="ECO:0007829" key="69">
    <source>
        <dbReference type="PDB" id="3N4I"/>
    </source>
</evidence>
<dbReference type="EC" id="3.5.2.6" evidence="4 10 14 17"/>
<dbReference type="EMBL" id="M59181">
    <property type="protein sequence ID" value="AAA26087.1"/>
    <property type="molecule type" value="Genomic_DNA"/>
</dbReference>
<dbReference type="EMBL" id="X98098">
    <property type="protein sequence ID" value="CAA66726.1"/>
    <property type="molecule type" value="Genomic_DNA"/>
</dbReference>
<dbReference type="EMBL" id="X98099">
    <property type="protein sequence ID" value="CAA66727.1"/>
    <property type="molecule type" value="Genomic_DNA"/>
</dbReference>
<dbReference type="EMBL" id="X98100">
    <property type="protein sequence ID" value="CAA66728.1"/>
    <property type="molecule type" value="Genomic_DNA"/>
</dbReference>
<dbReference type="EMBL" id="AF124984">
    <property type="protein sequence ID" value="AAD18054.1"/>
    <property type="molecule type" value="Genomic_DNA"/>
</dbReference>
<dbReference type="PIR" id="A44996">
    <property type="entry name" value="A44996"/>
</dbReference>
<dbReference type="PDB" id="1ONG">
    <property type="method" value="X-ray"/>
    <property type="resolution" value="1.10 A"/>
    <property type="chains" value="A=22-286"/>
</dbReference>
<dbReference type="PDB" id="1Q2P">
    <property type="method" value="X-ray"/>
    <property type="resolution" value="2.00 A"/>
    <property type="chains" value="A=22-286"/>
</dbReference>
<dbReference type="PDB" id="1RCJ">
    <property type="method" value="X-ray"/>
    <property type="resolution" value="1.63 A"/>
    <property type="chains" value="A=22-286"/>
</dbReference>
<dbReference type="PDB" id="1SHV">
    <property type="method" value="X-ray"/>
    <property type="resolution" value="1.98 A"/>
    <property type="chains" value="A=22-286"/>
</dbReference>
<dbReference type="PDB" id="1TDG">
    <property type="method" value="X-ray"/>
    <property type="resolution" value="1.80 A"/>
    <property type="chains" value="A=22-286"/>
</dbReference>
<dbReference type="PDB" id="1TDL">
    <property type="method" value="X-ray"/>
    <property type="resolution" value="1.80 A"/>
    <property type="chains" value="A=22-286"/>
</dbReference>
<dbReference type="PDB" id="1VM1">
    <property type="method" value="X-ray"/>
    <property type="resolution" value="2.02 A"/>
    <property type="chains" value="A=22-286"/>
</dbReference>
<dbReference type="PDB" id="2A3U">
    <property type="method" value="X-ray"/>
    <property type="resolution" value="1.34 A"/>
    <property type="chains" value="A=22-286"/>
</dbReference>
<dbReference type="PDB" id="2A49">
    <property type="method" value="X-ray"/>
    <property type="resolution" value="1.43 A"/>
    <property type="chains" value="A=22-286"/>
</dbReference>
<dbReference type="PDB" id="2G2U">
    <property type="method" value="X-ray"/>
    <property type="resolution" value="1.60 A"/>
    <property type="chains" value="A=22-284"/>
</dbReference>
<dbReference type="PDB" id="2G2W">
    <property type="method" value="X-ray"/>
    <property type="resolution" value="1.80 A"/>
    <property type="chains" value="A=22-284"/>
</dbReference>
<dbReference type="PDB" id="2H0T">
    <property type="method" value="X-ray"/>
    <property type="resolution" value="1.60 A"/>
    <property type="chains" value="A=22-286"/>
</dbReference>
<dbReference type="PDB" id="2H0Y">
    <property type="method" value="X-ray"/>
    <property type="resolution" value="1.70 A"/>
    <property type="chains" value="A=22-284"/>
</dbReference>
<dbReference type="PDB" id="2H10">
    <property type="method" value="X-ray"/>
    <property type="resolution" value="1.75 A"/>
    <property type="chains" value="A=22-284"/>
</dbReference>
<dbReference type="PDB" id="2H5S">
    <property type="method" value="X-ray"/>
    <property type="resolution" value="1.28 A"/>
    <property type="chains" value="A=22-286"/>
</dbReference>
<dbReference type="PDB" id="2ZD8">
    <property type="method" value="X-ray"/>
    <property type="resolution" value="1.05 A"/>
    <property type="chains" value="A=22-286"/>
</dbReference>
<dbReference type="PDB" id="3C4O">
    <property type="method" value="X-ray"/>
    <property type="resolution" value="1.70 A"/>
    <property type="chains" value="A=22-286"/>
</dbReference>
<dbReference type="PDB" id="3C4P">
    <property type="method" value="X-ray"/>
    <property type="resolution" value="1.75 A"/>
    <property type="chains" value="A=22-286"/>
</dbReference>
<dbReference type="PDB" id="3D4F">
    <property type="method" value="X-ray"/>
    <property type="resolution" value="1.55 A"/>
    <property type="chains" value="A=1-286"/>
</dbReference>
<dbReference type="PDB" id="3MKE">
    <property type="method" value="X-ray"/>
    <property type="resolution" value="1.75 A"/>
    <property type="chains" value="A=22-286"/>
</dbReference>
<dbReference type="PDB" id="3MKF">
    <property type="method" value="X-ray"/>
    <property type="resolution" value="1.33 A"/>
    <property type="chains" value="A=22-286"/>
</dbReference>
<dbReference type="PDB" id="3MXR">
    <property type="method" value="X-ray"/>
    <property type="resolution" value="1.30 A"/>
    <property type="chains" value="A=22-286"/>
</dbReference>
<dbReference type="PDB" id="3MXS">
    <property type="method" value="X-ray"/>
    <property type="resolution" value="1.24 A"/>
    <property type="chains" value="A=22-286"/>
</dbReference>
<dbReference type="PDB" id="3N4I">
    <property type="method" value="X-ray"/>
    <property type="resolution" value="1.56 A"/>
    <property type="chains" value="A=22-286"/>
</dbReference>
<dbReference type="PDB" id="3OPH">
    <property type="method" value="X-ray"/>
    <property type="resolution" value="1.34 A"/>
    <property type="chains" value="A=1-286"/>
</dbReference>
<dbReference type="PDB" id="3OPL">
    <property type="method" value="X-ray"/>
    <property type="resolution" value="1.80 A"/>
    <property type="chains" value="A=1-286"/>
</dbReference>
<dbReference type="PDB" id="3OPP">
    <property type="method" value="X-ray"/>
    <property type="resolution" value="1.80 A"/>
    <property type="chains" value="A=1-286"/>
</dbReference>
<dbReference type="PDB" id="3OPR">
    <property type="method" value="X-ray"/>
    <property type="resolution" value="1.65 A"/>
    <property type="chains" value="A=1-286"/>
</dbReference>
<dbReference type="PDB" id="3V50">
    <property type="method" value="X-ray"/>
    <property type="resolution" value="1.45 A"/>
    <property type="chains" value="A=22-286"/>
</dbReference>
<dbReference type="PDB" id="3V5M">
    <property type="method" value="X-ray"/>
    <property type="resolution" value="1.30 A"/>
    <property type="chains" value="A=22-286"/>
</dbReference>
<dbReference type="PDB" id="4FCF">
    <property type="method" value="X-ray"/>
    <property type="resolution" value="1.09 A"/>
    <property type="chains" value="A=22-286"/>
</dbReference>
<dbReference type="PDB" id="4FD8">
    <property type="method" value="X-ray"/>
    <property type="resolution" value="1.52 A"/>
    <property type="chains" value="A=22-286"/>
</dbReference>
<dbReference type="PDB" id="4FH2">
    <property type="method" value="X-ray"/>
    <property type="resolution" value="1.44 A"/>
    <property type="chains" value="A=22-286"/>
</dbReference>
<dbReference type="PDB" id="4FH4">
    <property type="method" value="X-ray"/>
    <property type="resolution" value="1.09 A"/>
    <property type="chains" value="A=22-286"/>
</dbReference>
<dbReference type="PDB" id="4GD6">
    <property type="method" value="X-ray"/>
    <property type="resolution" value="1.53 A"/>
    <property type="chains" value="A=1-286"/>
</dbReference>
<dbReference type="PDB" id="4GD8">
    <property type="method" value="X-ray"/>
    <property type="resolution" value="1.60 A"/>
    <property type="chains" value="A=1-286"/>
</dbReference>
<dbReference type="PDB" id="4GDB">
    <property type="method" value="X-ray"/>
    <property type="resolution" value="1.84 A"/>
    <property type="chains" value="A=1-286"/>
</dbReference>
<dbReference type="PDB" id="4JPM">
    <property type="method" value="X-ray"/>
    <property type="resolution" value="1.14 A"/>
    <property type="chains" value="A=1-286"/>
</dbReference>
<dbReference type="PDB" id="4MBF">
    <property type="method" value="X-ray"/>
    <property type="resolution" value="1.54 A"/>
    <property type="chains" value="A=22-286"/>
</dbReference>
<dbReference type="PDB" id="4MBH">
    <property type="method" value="X-ray"/>
    <property type="resolution" value="1.22 A"/>
    <property type="chains" value="A=22-286"/>
</dbReference>
<dbReference type="PDB" id="4MBK">
    <property type="method" value="X-ray"/>
    <property type="resolution" value="1.46 A"/>
    <property type="chains" value="A=22-286"/>
</dbReference>
<dbReference type="PDB" id="4R3B">
    <property type="method" value="X-ray"/>
    <property type="resolution" value="1.37 A"/>
    <property type="chains" value="A=22-286"/>
</dbReference>
<dbReference type="PDB" id="4ZAM">
    <property type="method" value="X-ray"/>
    <property type="resolution" value="1.42 A"/>
    <property type="chains" value="A=22-286"/>
</dbReference>
<dbReference type="PDB" id="5EE8">
    <property type="method" value="X-ray"/>
    <property type="resolution" value="1.54 A"/>
    <property type="chains" value="A=22-286"/>
</dbReference>
<dbReference type="PDBsum" id="1ONG"/>
<dbReference type="PDBsum" id="1Q2P"/>
<dbReference type="PDBsum" id="1RCJ"/>
<dbReference type="PDBsum" id="1SHV"/>
<dbReference type="PDBsum" id="1TDG"/>
<dbReference type="PDBsum" id="1TDL"/>
<dbReference type="PDBsum" id="1VM1"/>
<dbReference type="PDBsum" id="2A3U"/>
<dbReference type="PDBsum" id="2A49"/>
<dbReference type="PDBsum" id="2G2U"/>
<dbReference type="PDBsum" id="2G2W"/>
<dbReference type="PDBsum" id="2H0T"/>
<dbReference type="PDBsum" id="2H0Y"/>
<dbReference type="PDBsum" id="2H10"/>
<dbReference type="PDBsum" id="2H5S"/>
<dbReference type="PDBsum" id="2ZD8"/>
<dbReference type="PDBsum" id="3C4O"/>
<dbReference type="PDBsum" id="3C4P"/>
<dbReference type="PDBsum" id="3D4F"/>
<dbReference type="PDBsum" id="3MKE"/>
<dbReference type="PDBsum" id="3MKF"/>
<dbReference type="PDBsum" id="3MXR"/>
<dbReference type="PDBsum" id="3MXS"/>
<dbReference type="PDBsum" id="3N4I"/>
<dbReference type="PDBsum" id="3OPH"/>
<dbReference type="PDBsum" id="3OPL"/>
<dbReference type="PDBsum" id="3OPP"/>
<dbReference type="PDBsum" id="3OPR"/>
<dbReference type="PDBsum" id="3V50"/>
<dbReference type="PDBsum" id="3V5M"/>
<dbReference type="PDBsum" id="4FCF"/>
<dbReference type="PDBsum" id="4FD8"/>
<dbReference type="PDBsum" id="4FH2"/>
<dbReference type="PDBsum" id="4FH4"/>
<dbReference type="PDBsum" id="4GD6"/>
<dbReference type="PDBsum" id="4GD8"/>
<dbReference type="PDBsum" id="4GDB"/>
<dbReference type="PDBsum" id="4JPM"/>
<dbReference type="PDBsum" id="4MBF"/>
<dbReference type="PDBsum" id="4MBH"/>
<dbReference type="PDBsum" id="4MBK"/>
<dbReference type="PDBsum" id="4R3B"/>
<dbReference type="PDBsum" id="4ZAM"/>
<dbReference type="PDBsum" id="5EE8"/>
<dbReference type="SMR" id="P0AD64"/>
<dbReference type="BindingDB" id="P0AD64"/>
<dbReference type="ChEMBL" id="CHEMBL5094"/>
<dbReference type="DrugBank" id="DB08116">
    <property type="generic name" value="(3R)-4-{[(3,4-dihydroxyphenyl)acetyl]oxy}-N-(2-formylindolizin-3-yl)-3-sulfino-D-valine"/>
</dbReference>
<dbReference type="DrugBank" id="DB03970">
    <property type="generic name" value="(7R)-7-(6,7-Dihydro-5H-cyclopenta[d]imidazo[2,1-b][1,3]thiazol-2-yl)-2,7-dihydro-1,4-thiazepine-3,6-dicarboxylic acid"/>
</dbReference>
<dbReference type="DrugBank" id="DB09060">
    <property type="generic name" value="Avibactam"/>
</dbReference>
<dbReference type="DrugBank" id="DB12107">
    <property type="generic name" value="Vaborbactam"/>
</dbReference>
<dbReference type="DrugCentral" id="P0AD64"/>
<dbReference type="CARD" id="ARO:3001059">
    <property type="molecule name" value="SHV-1"/>
    <property type="mechanism identifier" value="ARO:0001004"/>
    <property type="mechanism name" value="antibiotic inactivation"/>
</dbReference>
<dbReference type="BRENDA" id="3.5.2.6">
    <property type="organism ID" value="2814"/>
</dbReference>
<dbReference type="SABIO-RK" id="P0AD64"/>
<dbReference type="EvolutionaryTrace" id="P0AD64"/>
<dbReference type="GO" id="GO:0008800">
    <property type="term" value="F:beta-lactamase activity"/>
    <property type="evidence" value="ECO:0007669"/>
    <property type="project" value="UniProtKB-EC"/>
</dbReference>
<dbReference type="GO" id="GO:0030655">
    <property type="term" value="P:beta-lactam antibiotic catabolic process"/>
    <property type="evidence" value="ECO:0007669"/>
    <property type="project" value="InterPro"/>
</dbReference>
<dbReference type="GO" id="GO:0046677">
    <property type="term" value="P:response to antibiotic"/>
    <property type="evidence" value="ECO:0007669"/>
    <property type="project" value="UniProtKB-KW"/>
</dbReference>
<dbReference type="Gene3D" id="3.40.710.10">
    <property type="entry name" value="DD-peptidase/beta-lactamase superfamily"/>
    <property type="match status" value="1"/>
</dbReference>
<dbReference type="InterPro" id="IPR012338">
    <property type="entry name" value="Beta-lactam/transpept-like"/>
</dbReference>
<dbReference type="InterPro" id="IPR045155">
    <property type="entry name" value="Beta-lactam_cat"/>
</dbReference>
<dbReference type="InterPro" id="IPR000871">
    <property type="entry name" value="Beta-lactam_class-A"/>
</dbReference>
<dbReference type="InterPro" id="IPR023650">
    <property type="entry name" value="Beta-lactam_class-A_AS"/>
</dbReference>
<dbReference type="NCBIfam" id="NF033103">
    <property type="entry name" value="bla_class_A"/>
    <property type="match status" value="1"/>
</dbReference>
<dbReference type="NCBIfam" id="NF000285">
    <property type="entry name" value="SHV"/>
    <property type="match status" value="1"/>
</dbReference>
<dbReference type="NCBIfam" id="NF012143">
    <property type="entry name" value="SHV_LEN_OKP"/>
    <property type="match status" value="1"/>
</dbReference>
<dbReference type="PANTHER" id="PTHR35333">
    <property type="entry name" value="BETA-LACTAMASE"/>
    <property type="match status" value="1"/>
</dbReference>
<dbReference type="PANTHER" id="PTHR35333:SF3">
    <property type="entry name" value="BETA-LACTAMASE-TYPE TRANSPEPTIDASE FOLD CONTAINING PROTEIN"/>
    <property type="match status" value="1"/>
</dbReference>
<dbReference type="Pfam" id="PF13354">
    <property type="entry name" value="Beta-lactamase2"/>
    <property type="match status" value="1"/>
</dbReference>
<dbReference type="PRINTS" id="PR00118">
    <property type="entry name" value="BLACTAMASEA"/>
</dbReference>
<dbReference type="SUPFAM" id="SSF56601">
    <property type="entry name" value="beta-lactamase/transpeptidase-like"/>
    <property type="match status" value="1"/>
</dbReference>
<dbReference type="PROSITE" id="PS00146">
    <property type="entry name" value="BETA_LACTAMASE_A"/>
    <property type="match status" value="1"/>
</dbReference>
<organism>
    <name type="scientific">Klebsiella pneumoniae</name>
    <dbReference type="NCBI Taxonomy" id="573"/>
    <lineage>
        <taxon>Bacteria</taxon>
        <taxon>Pseudomonadati</taxon>
        <taxon>Pseudomonadota</taxon>
        <taxon>Gammaproteobacteria</taxon>
        <taxon>Enterobacterales</taxon>
        <taxon>Enterobacteriaceae</taxon>
        <taxon>Klebsiella/Raoultella group</taxon>
        <taxon>Klebsiella</taxon>
        <taxon>Klebsiella pneumoniae complex</taxon>
    </lineage>
</organism>
<proteinExistence type="evidence at protein level"/>
<name>BLA1_KLEPN</name>
<accession>P0AD64</accession>
<accession>O07941</accession>
<accession>P14557</accession>
<accession>P23982</accession>
<reference key="1">
    <citation type="journal article" date="1990" name="Antimicrob. Agents Chemother.">
        <title>Cloning of SHV-2, OHIO-1, and OXA-6 beta-lactamases and cloning and sequencing of SHV-1 beta-lactamase.</title>
        <authorList>
            <person name="Mercier J."/>
            <person name="Levesque R.C."/>
        </authorList>
    </citation>
    <scope>NUCLEOTIDE SEQUENCE [GENOMIC DNA]</scope>
    <source>
        <plasmid evidence="21">R974</plasmid>
    </source>
</reference>
<reference key="2">
    <citation type="journal article" date="1997" name="Antimicrob. Agents Chemother.">
        <title>Survey and molecular genetics of SHV beta-lactamases in Enterobacteriaceae in Switzerland: two novel enzymes, SHV-11 and SHV-12.</title>
        <authorList>
            <person name="Nuesch-Inderbinen M."/>
            <person name="Kayser F.H."/>
            <person name="Hachler H."/>
        </authorList>
    </citation>
    <scope>NUCLEOTIDE SEQUENCE [GENOMIC DNA]</scope>
    <source>
        <strain evidence="22">KPAA-1</strain>
        <strain evidence="22">KPZU-13</strain>
        <strain evidence="22">KPZU-8</strain>
        <strain evidence="22">KPZU-9</strain>
    </source>
</reference>
<reference key="3">
    <citation type="journal article" date="2000" name="Antimicrob. Agents Chemother.">
        <title>High-level expression of chromosomally encoded SHV-1 beta-lactamase and an outer membrane protein change confer resistance to ceftazidime and piperacillin-tazobactam in a clinical isolate of Klebsiella pneumoniae.</title>
        <authorList>
            <person name="Rice L.B."/>
            <person name="Carias L.L."/>
            <person name="Hujer A.M."/>
            <person name="Bonafede M."/>
            <person name="Hutton R."/>
            <person name="Hoyen C."/>
            <person name="Bonomo R.A."/>
        </authorList>
    </citation>
    <scope>NUCLEOTIDE SEQUENCE [GENOMIC DNA]</scope>
    <scope>FUNCTION</scope>
    <source>
        <strain evidence="20">15571</strain>
    </source>
</reference>
<reference key="4">
    <citation type="journal article" date="1991" name="Biochem. J.">
        <title>A standard numbering scheme for the class A beta-lactamases.</title>
        <authorList>
            <person name="Ambler R.P."/>
            <person name="Coulson A.F."/>
            <person name="Frere J.M."/>
            <person name="Ghuysen J.M."/>
            <person name="Joris B."/>
            <person name="Forsman M."/>
            <person name="Levesque R.C."/>
            <person name="Tiraby G."/>
            <person name="Waley S.G."/>
        </authorList>
    </citation>
    <scope>NOMENCLATURE</scope>
</reference>
<reference key="5">
    <citation type="journal article" date="2009" name="Biochemistry">
        <title>The role of a second-shell residue in modifying substrate and inhibitor interactions in the SHV beta-lactamase: a study of ambler position Asn276.</title>
        <authorList>
            <person name="Drawz S.M."/>
            <person name="Bethel C.R."/>
            <person name="Hujer K.M."/>
            <person name="Hurless K.N."/>
            <person name="Distler A.M."/>
            <person name="Caselli E."/>
            <person name="Prati F."/>
            <person name="Bonomo R.A."/>
        </authorList>
    </citation>
    <scope>FUNCTION</scope>
    <scope>CATALYTIC ACTIVITY</scope>
    <scope>ACTIVITY REGULATION</scope>
    <scope>BIOPHYSICOCHEMICAL PROPERTIES</scope>
    <scope>MUTAGENESIS OF ASN-270</scope>
</reference>
<reference key="6">
    <citation type="journal article" date="2012" name="Antimicrob. Agents Chemother.">
        <title>Substitutions at position 105 in SHV family beta-lactamases decrease catalytic efficiency and cause inhibitor resistance.</title>
        <authorList>
            <person name="Li M."/>
            <person name="Conklin B.C."/>
            <person name="Taracila M.A."/>
            <person name="Hutton R.A."/>
            <person name="Skalweit M.J."/>
        </authorList>
    </citation>
    <scope>FUNCTION</scope>
    <scope>CATALYTIC ACTIVITY</scope>
    <scope>ACTIVITY REGULATION</scope>
    <scope>MUTAGENESIS OF TYR-101</scope>
</reference>
<reference key="7">
    <citation type="journal article" date="1999" name="Biochemistry">
        <title>Structure of the SHV-1 beta-lactamase.</title>
        <authorList>
            <person name="Kuzin A.P."/>
            <person name="Nukaga M."/>
            <person name="Nukaga Y."/>
            <person name="Hujer A.M."/>
            <person name="Bonomo R.A."/>
            <person name="Knox J.R."/>
        </authorList>
    </citation>
    <scope>X-RAY CRYSTALLOGRAPHY (1.98 ANGSTROMS)</scope>
    <scope>FUNCTION</scope>
    <scope>CATALYTIC ACTIVITY</scope>
    <source>
        <strain>15571</strain>
    </source>
</reference>
<reference evidence="30" key="8">
    <citation type="journal article" date="2001" name="Biochemistry">
        <title>Inhibition of the SHV-1 beta-lactamase by sulfones: crystallographic observation of two reaction intermediates with tazobactam.</title>
        <authorList>
            <person name="Kuzin A.P."/>
            <person name="Nukaga M."/>
            <person name="Nukaga Y."/>
            <person name="Hujer A."/>
            <person name="Bonomo R.A."/>
            <person name="Knox J.R."/>
        </authorList>
    </citation>
    <scope>X-RAY CRYSTALLOGRAPHY (2.02 ANGSTROMS) OF 22-286 IN COMPLEX WITH INHIBITOR TAZOBACTAM</scope>
    <scope>ACTIVITY REGULATION</scope>
</reference>
<reference evidence="25" key="9">
    <citation type="journal article" date="2003" name="Biochemistry">
        <title>Inhibition of class A and class C beta-lactamases by penems: crystallographic structures of a novel 1,4-thiazepine intermediate.</title>
        <authorList>
            <person name="Nukaga M."/>
            <person name="Abe T."/>
            <person name="Venkatesan A.M."/>
            <person name="Mansour T.S."/>
            <person name="Bonomo R.A."/>
            <person name="Knox J.R."/>
        </authorList>
    </citation>
    <scope>X-RAY CRYSTALLOGRAPHY (1.10 ANGSTROMS) OF 22-286 IN COMPLEX WITH INHIBITOR PENEM</scope>
</reference>
<reference evidence="28 29" key="10">
    <citation type="journal article" date="2004" name="Biochemistry">
        <title>Inhibitor-resistant class A beta-lactamases: consequences of the Ser130-to-Gly mutation seen in Apo and tazobactam structures of the SHV-1 variant.</title>
        <authorList>
            <person name="Sun T."/>
            <person name="Bethel C.R."/>
            <person name="Bonomo R.A."/>
            <person name="Knox J.R."/>
        </authorList>
    </citation>
    <scope>X-RAY CRYSTALLOGRAPHY (1.80 ANGSTROMS) OF 22-286 OF MUTANT GLY-126 IN APO FORM AND IN COMPLEX WITH INHIBITOR TAZOBACTAM</scope>
</reference>
<reference evidence="27" key="11">
    <citation type="journal article" date="2004" name="Biochemistry">
        <title>Tazobactam forms a stoichiometric trans-enamine intermediate in the E166A variant of SHV-1 beta-lactamase: 1.63 A crystal structure.</title>
        <authorList>
            <person name="Padayatti P.S."/>
            <person name="Helfand M.S."/>
            <person name="Totir M.A."/>
            <person name="Carey M.P."/>
            <person name="Hujer A.M."/>
            <person name="Carey P.R."/>
            <person name="Bonomo R.A."/>
            <person name="van den Akker F."/>
        </authorList>
    </citation>
    <scope>X-RAY CRYSTALLOGRAPHY (1.63 ANGSTROMS) OF 22-286 OF MUTANT ALA-162 IN COMPLEX WITH INHIBITOR TAZOBACTAM</scope>
</reference>
<reference evidence="26" key="12">
    <citation type="journal article" date="2004" name="J. Med. Chem.">
        <title>Structure-activity relationship of 6-methylidene penems bearing tricyclic heterocycles as broad-spectrum beta-lactamase inhibitors: crystallographic structures show unexpected binding of 1,4-thiazepine intermediates.</title>
        <authorList>
            <person name="Venkatesan A.M."/>
            <person name="Gu Y."/>
            <person name="Dos Santos O."/>
            <person name="Abe T."/>
            <person name="Agarwal A."/>
            <person name="Yang Y."/>
            <person name="Petersen P.J."/>
            <person name="Weiss W.J."/>
            <person name="Mansour T.S."/>
            <person name="Nukaga M."/>
            <person name="Hujer A.M."/>
            <person name="Bonomo R.A."/>
            <person name="Knox J.R."/>
        </authorList>
    </citation>
    <scope>X-RAY CRYSTALLOGRAPHY (2.00 ANGSTROMS) OF 22-286 IN COMPLEX WITH INHIBITOR 6-METHYLIDENE PENEM</scope>
</reference>
<reference evidence="31 32" key="13">
    <citation type="journal article" date="2005" name="J. Biol. Chem.">
        <title>High resolution crystal structures of the trans-enamine intermediates formed by sulbactam and clavulanic acid and E166A SHV-1 {beta}-lactamase.</title>
        <authorList>
            <person name="Padayatti P.S."/>
            <person name="Helfand M.S."/>
            <person name="Totir M.A."/>
            <person name="Carey M.P."/>
            <person name="Carey P.R."/>
            <person name="Bonomo R.A."/>
            <person name="van den Akker F."/>
        </authorList>
    </citation>
    <scope>X-RAY CRYSTALLOGRAPHY (1.34 ANGSTROMS) OF 22-286 OF MUTANT ALA-162 IN COMPLEXES WITH INHIBITORS SULBACTAM AND CLAVULANIC ACID</scope>
</reference>
<reference evidence="35 36 37" key="14">
    <citation type="journal article" date="2006" name="Biochemistry">
        <title>Effect of the inhibitor-resistant M69V substitution on the structures and populations of trans-enamine beta-lactamase intermediates.</title>
        <authorList>
            <person name="Totir M.A."/>
            <person name="Padayatti P.S."/>
            <person name="Helfand M.S."/>
            <person name="Carey M.P."/>
            <person name="Bonomo R.A."/>
            <person name="Carey P.R."/>
            <person name="van den Akker F."/>
        </authorList>
    </citation>
    <scope>X-RAY CRYSTALLOGRAPHY (1.60 ANGSTROMS) OF 22-286 OF MUTANT ALA-162 AND DOUBLE MUTANT VAL-65/ALA-162 IN COMPLEXES WITH INHIBITORS</scope>
</reference>
<reference evidence="38" key="15">
    <citation type="journal article" date="2006" name="J. Am. Chem. Soc.">
        <title>Rational design of a beta-lactamase inhibitor achieved via stabilization of the trans-enamine intermediate: 1.28 A crystal structure of wt SHV-1 complex with a penam sulfone.</title>
        <authorList>
            <person name="Padayatti P.S."/>
            <person name="Sheri A."/>
            <person name="Totir M.A."/>
            <person name="Helfand M.S."/>
            <person name="Carey M.P."/>
            <person name="Anderson V.E."/>
            <person name="Carey P.R."/>
            <person name="Bethel C.R."/>
            <person name="Bonomo R.A."/>
            <person name="Buynak J.D."/>
            <person name="van den Akker F."/>
        </authorList>
    </citation>
    <scope>X-RAY CRYSTALLOGRAPHY (1.28 ANGSTROMS) OF 22-286 IN COMPLEX WITH INHIBITOR PENAM SULFONE SA2-13</scope>
</reference>
<reference evidence="33 34" key="16">
    <citation type="journal article" date="2006" name="J. Biol. Chem.">
        <title>Structural and computational characterization of the SHV-1 beta-lactamase-beta-lactamase inhibitor protein interface.</title>
        <authorList>
            <person name="Reynolds K.A."/>
            <person name="Thomson J.M."/>
            <person name="Corbett K.D."/>
            <person name="Bethel C.R."/>
            <person name="Berger J.M."/>
            <person name="Kirsch J.F."/>
            <person name="Bonomo R.A."/>
            <person name="Handel T.M."/>
        </authorList>
    </citation>
    <scope>X-RAY CRYSTALLOGRAPHY (1.60 ANGSTROMS) OF 22-286 APO FORM AND MUTANT LYS-97 IN COMPLEXES WITH S.CLAVULIGERIS BLIP</scope>
    <scope>MUTAGENESIS OF ASP-97</scope>
</reference>
<reference evidence="40 41" key="17">
    <citation type="journal article" date="2008" name="J. Mol. Biol.">
        <title>Computational redesign of the SHV-1 beta-lactamase/beta-lactamase inhibitor protein interface.</title>
        <authorList>
            <person name="Reynolds K.A."/>
            <person name="Hanes M.S."/>
            <person name="Thomson J.M."/>
            <person name="Antczak A.J."/>
            <person name="Berger J.M."/>
            <person name="Bonomo R.A."/>
            <person name="Kirsch J.F."/>
            <person name="Handel T.M."/>
        </authorList>
    </citation>
    <scope>X-RAY CRYSTALLOGRAPHY (1.70 ANGSTROMS) OF 22-286</scope>
    <scope>INTERACTION WITH MUTANT PROTEINS S.CLAVULIGERIS BLIP</scope>
</reference>
<reference evidence="39" key="18">
    <citation type="journal article" date="2008" name="J. Am. Chem. Soc.">
        <title>Inhibition of class A beta-lactamases by carbapenems: crystallographic observation of two conformations of meropenem in SHV-1.</title>
        <authorList>
            <person name="Nukaga M."/>
            <person name="Bethel C.R."/>
            <person name="Thomson J.M."/>
            <person name="Hujer A.M."/>
            <person name="Distler A."/>
            <person name="Anderson V.E."/>
            <person name="Knox J.R."/>
            <person name="Bonomo R.A."/>
        </authorList>
    </citation>
    <scope>X-RAY CRYSTALLOGRAPHY (1.05 ANGSTROMS) OF 22-286 IN COMPLEX WITH INHIBITOR MEROPENEM</scope>
</reference>
<reference evidence="42" key="19">
    <citation type="journal article" date="2009" name="J. Biol. Chem.">
        <title>Strategic design of an effective beta-lactamase inhibitor: LN-1-255, a 6-alkylidene-2'-substituted penicillin sulfone.</title>
        <authorList>
            <person name="Pattanaik P."/>
            <person name="Bethel C.R."/>
            <person name="Hujer A.M."/>
            <person name="Hujer K.M."/>
            <person name="Distler A.M."/>
            <person name="Taracila M."/>
            <person name="Anderson V.E."/>
            <person name="Fritsche T.R."/>
            <person name="Jones R.N."/>
            <person name="Pagadala S.R."/>
            <person name="van den Akker F."/>
            <person name="Buynak J.D."/>
            <person name="Bonomo R.A."/>
        </authorList>
    </citation>
    <scope>X-RAY CRYSTALLOGRAPHY (1.55 ANGSTROMS) IN COMPLEX WITH INHIBITOR SULFONE LN-1-255</scope>
    <scope>FUNCTION</scope>
    <scope>ACTIVITY REGULATION</scope>
    <scope>MUTAGENESIS OF SER-126</scope>
</reference>
<reference evidence="43 44 45 46" key="20">
    <citation type="journal article" date="2011" name="Antimicrob. Agents Chemother.">
        <title>Novel insights into the mode of inhibition of class A SHV-1 beta-lactamases revealed by boronic acid transition state inhibitors.</title>
        <authorList>
            <person name="Ke W."/>
            <person name="Sampson J.M."/>
            <person name="Ori C."/>
            <person name="Prati F."/>
            <person name="Drawz S.M."/>
            <person name="Bethel C.R."/>
            <person name="Bonomo R.A."/>
            <person name="van den Akker F."/>
        </authorList>
    </citation>
    <scope>X-RAY CRYSTALLOGRAPHY (1.24 ANGSTROMS) OF 22-286 IN COMPLEXES WITH INHIBITOR BORONIC ACID TRANSITION STATE ANALOGS</scope>
</reference>
<reference evidence="48 49 50 51" key="21">
    <citation type="journal article" date="2011" name="Antimicrob. Agents Chemother.">
        <title>Ligand-dependent disorder of the Omega loop observed in extended-spectrum SHV-type beta-lactamase.</title>
        <authorList>
            <person name="Sampson J.M."/>
            <person name="Ke W."/>
            <person name="Bethel C.R."/>
            <person name="Pagadala S.R."/>
            <person name="Nottingham M.D."/>
            <person name="Bonomo R.A."/>
            <person name="Buynak J.D."/>
            <person name="van den Akker F."/>
        </authorList>
    </citation>
    <scope>X-RAY CRYSTALLOGRAPHY (1.34 ANGSTROMS) OF MUTANTS SER-160 AND HIS-160 IN COMPLEXES WITH INHIBITOR SA2-13</scope>
    <scope>MUTAGENESIS OF ARG-160</scope>
</reference>
<reference evidence="47" key="22">
    <citation type="journal article" date="2011" name="Proteins">
        <title>Specificity and cooperativity at beta-lactamase position 104 in TEM-1/BLIP and SHV-1/BLIP interactions.</title>
        <authorList>
            <person name="Hanes M.S."/>
            <person name="Reynolds K.A."/>
            <person name="McNamara C."/>
            <person name="Ghosh P."/>
            <person name="Bonomo R.A."/>
            <person name="Kirsch J.F."/>
            <person name="Handel T.M."/>
        </authorList>
    </citation>
    <scope>X-RAY CRYSTALLOGRAPHY (1.56 ANGSTROMS) OF 22-286 OF MUTANT GLU-97 IN COMPLEX WITH S.CLAVULIGERIS BLIP</scope>
    <scope>MUTAGENESIS OF ASP-97</scope>
</reference>
<reference evidence="52 53" key="23">
    <citation type="journal article" date="2012" name="ChemMedChem">
        <title>The importance of the trans-enamine intermediate as a beta-lactamase inhibition strategy probed in inhibitor-resistant SHV beta-lactamase variants.</title>
        <authorList>
            <person name="Ke W."/>
            <person name="Rodkey E.A."/>
            <person name="Sampson J.M."/>
            <person name="Skalweit M.J."/>
            <person name="Sheri A."/>
            <person name="Pagadala S.R."/>
            <person name="Nottingham M.D."/>
            <person name="Buynak J.D."/>
            <person name="Bonomo R.A."/>
            <person name="van den Akker F."/>
        </authorList>
    </citation>
    <scope>X-RAY CRYSTALLOGRAPHY (1.30 ANGSTROMS) OF 22-286 OF MUTANT GLY-126 IN COMPLEX WITH INHIBITOR SA2-13</scope>
</reference>
<reference evidence="55 56 57" key="24">
    <citation type="journal article" date="2012" name="J. Am. Chem. Soc.">
        <title>Crystal structure of a preacylation complex of the beta-lactamase inhibitor sulbactam bound to a sulfenamide bond-containing thiol-beta-lactamase.</title>
        <authorList>
            <person name="Rodkey E.A."/>
            <person name="Drawz S.M."/>
            <person name="Sampson J.M."/>
            <person name="Bethel C.R."/>
            <person name="Bonomo R.A."/>
            <person name="van den Akker F."/>
        </authorList>
    </citation>
    <scope>X-RAY CRYSTALLOGRAPHY (1.09 ANGSTROMS) OF 22-286 OF MUTANT CYS-66 IN COMPLEX WITH INHIBITOR SULBACTAM</scope>
    <scope>ACTIVITY REGULATION</scope>
    <scope>MUTAGENESIS OF SER-66</scope>
</reference>
<reference evidence="58 59 60" key="25">
    <citation type="journal article" date="2012" name="PLoS ONE">
        <title>Structures of SHV-1 beta-lactamase with penem and penam sulfone inhibitors that form cyclic intermediates stabilized by carbonyl conjugation.</title>
        <authorList>
            <person name="Ke W."/>
            <person name="Pattanaik P."/>
            <person name="Bethel C.R."/>
            <person name="Sheri A."/>
            <person name="Buynak J.D."/>
            <person name="Bonomo R.A."/>
            <person name="van den Akker F."/>
        </authorList>
    </citation>
    <scope>X-RAY CRYSTALLOGRAPHY (1.53 ANGSTROMS) IN COMPLEXES WITH INHIBITORS PENEM AND PENAM SULFONE SA1-204 AND LN1-255</scope>
    <scope>FUNCTION</scope>
    <scope>ACTIVITY REGULATION</scope>
    <scope>MUTAGENESIS OF SER-126; ARG-160 AND ASP-175</scope>
</reference>
<reference evidence="54" key="26">
    <citation type="journal article" date="2013" name="J. Med. Chem.">
        <title>Design and exploration of novel boronic acid inhibitors reveals important interactions with a clavulanic acid-resistant sulfhydryl-variable (SHV) beta-lactamase.</title>
        <authorList>
            <person name="Winkler M.L."/>
            <person name="Rodkey E.A."/>
            <person name="Taracila M.A."/>
            <person name="Drawz S.M."/>
            <person name="Bethel C.R."/>
            <person name="Papp-Wallace K.M."/>
            <person name="Smith K.M."/>
            <person name="Xu Y."/>
            <person name="Dwulit-Smith J.R."/>
            <person name="Romagnoli C."/>
            <person name="Caselli E."/>
            <person name="Prati F."/>
            <person name="van den Akker F."/>
            <person name="Bonomo R.A."/>
        </authorList>
    </citation>
    <scope>X-RAY CRYSTALLOGRAPHY (1.09 ANGSTROMS) OF 22-286 OF MUTANT ARG-230</scope>
    <scope>FUNCTION</scope>
    <scope>CATALYTIC ACTIVITY</scope>
    <scope>ACTIVITY REGULATION</scope>
    <scope>BIOPHYSICOCHEMICAL PROPERTIES</scope>
    <scope>MUTAGENESIS OF LYS-230</scope>
</reference>
<reference evidence="61" key="27">
    <citation type="journal article" date="2013" name="J. Am. Chem. Soc.">
        <title>beta-Lactamase inhibition by 7-alkylidenecephalosporin sulfones: allylic transposition and formation of an unprecedented stabilized acyl-enzyme.</title>
        <authorList>
            <person name="Rodkey E.A."/>
            <person name="McLeod D.C."/>
            <person name="Bethel C.R."/>
            <person name="Smith K.M."/>
            <person name="Xu Y."/>
            <person name="Chai W."/>
            <person name="Che T."/>
            <person name="Carey P.R."/>
            <person name="Bonomo R.A."/>
            <person name="van den Akker F."/>
            <person name="Buynak J.D."/>
        </authorList>
    </citation>
    <scope>X-RAY CRYSTALLOGRAPHY (1.14 ANGSTROMS) IN COMPLEX WITH SULFONE INHIBITOR</scope>
    <scope>ACTIVITY REGULATION</scope>
</reference>
<reference evidence="62 63 64" key="28">
    <citation type="journal article" date="2014" name="PLoS ONE">
        <title>Penam sulfones and beta-lactamase inhibition: SA2-13 and the importance of the C2 side chain length and composition.</title>
        <authorList>
            <person name="Rodkey E.A."/>
            <person name="Winkler M.L."/>
            <person name="Bethel C.R."/>
            <person name="Pagadala S.R."/>
            <person name="Buynak J.D."/>
            <person name="Bonomo R.A."/>
            <person name="van den Akker F."/>
        </authorList>
    </citation>
    <scope>X-RAY CRYSTALLOGRAPHY (1.22 ANGSTROMS) OF 22-286 OF APO FORM AND MUTANT ARG-230 IN COMPLEXES WITH INHIBITOR PENAM SULFONES</scope>
</reference>
<reference evidence="65" key="29">
    <citation type="journal article" date="2015" name="Biochemistry">
        <title>Detecting a quasi-stable imine species on the reaction pathway of SHV-1 beta-lactamase and 6beta-(hydroxymethyl)penicillanic acid sulfone.</title>
        <authorList>
            <person name="Che T."/>
            <person name="Rodkey E.A."/>
            <person name="Bethel C.R."/>
            <person name="Shanmugam S."/>
            <person name="Ding Z."/>
            <person name="Pusztai-Carey M."/>
            <person name="Nottingham M."/>
            <person name="Chai W."/>
            <person name="Buynak J.D."/>
            <person name="Bonomo R.A."/>
            <person name="van den Akker F."/>
            <person name="Carey P.R."/>
        </authorList>
    </citation>
    <scope>X-RAY CRYSTALLOGRAPHY (1.37 ANGSTROMS) OF 22-286 IN COMPLEX WITH INHIBITOR SULFONE</scope>
</reference>
<reference evidence="66" key="30">
    <citation type="journal article" date="2015" name="PLoS ONE">
        <title>Inhibition of Klebsiella beta-Lactamases (SHV-1 and KPC-2) by Avibactam: A Structural Study.</title>
        <authorList>
            <person name="Krishnan N.P."/>
            <person name="Nguyen N.Q."/>
            <person name="Papp-Wallace K.M."/>
            <person name="Bonomo R.A."/>
            <person name="van den Akker F."/>
        </authorList>
    </citation>
    <scope>X-RAY CRYSTALLOGRAPHY (1.42 ANGSTROMS) OF 22-286 IN COMPLEX WITH INHIBITOR AVIBACTAM</scope>
</reference>
<reference evidence="67" key="31">
    <citation type="journal article" date="2016" name="Antimicrob. Agents Chemother.">
        <title>Crystal Structures of KPC-2 and SHV-1 beta-Lactamases in Complex with the Boronic Acid Transition State Analog S02030.</title>
        <authorList>
            <person name="Nguyen N.Q."/>
            <person name="Krishnan N.P."/>
            <person name="Rojas L.J."/>
            <person name="Prati F."/>
            <person name="Caselli E."/>
            <person name="Romagnoli C."/>
            <person name="Bonomo R.A."/>
            <person name="van den Akker F."/>
        </authorList>
    </citation>
    <scope>X-RAY CRYSTALLOGRAPHY (1.54 ANGSTROMS) OF 22-286 IN COMPLEX WITH INHIBITOR BORONIC ACID TRANSITION STATE ANALOG</scope>
</reference>
<feature type="signal peptide" evidence="2">
    <location>
        <begin position="1"/>
        <end position="21"/>
    </location>
</feature>
<feature type="chain" id="PRO_0000043362" description="Beta-lactamase SHV-1">
    <location>
        <begin position="22"/>
        <end position="286"/>
    </location>
</feature>
<feature type="active site" description="Nucleophile; acyl-ester intermediate" evidence="1 3">
    <location>
        <position position="66"/>
    </location>
</feature>
<feature type="active site" description="Proton acceptor">
    <location>
        <position position="164"/>
    </location>
</feature>
<feature type="binding site" evidence="1">
    <location>
        <position position="69"/>
    </location>
    <ligand>
        <name>a beta-lactam</name>
        <dbReference type="ChEBI" id="CHEBI:35627"/>
    </ligand>
</feature>
<feature type="binding site" evidence="1">
    <location>
        <position position="126"/>
    </location>
    <ligand>
        <name>a beta-lactam</name>
        <dbReference type="ChEBI" id="CHEBI:35627"/>
    </ligand>
</feature>
<feature type="binding site" evidence="1">
    <location>
        <position position="162"/>
    </location>
    <ligand>
        <name>a beta-lactam</name>
        <dbReference type="ChEBI" id="CHEBI:35627"/>
    </ligand>
</feature>
<feature type="disulfide bond" evidence="39">
    <location>
        <begin position="73"/>
        <end position="119"/>
    </location>
</feature>
<feature type="mutagenesis site" description="Forms sulfenamide bond with Lys-69." evidence="15">
    <original>S</original>
    <variation>C</variation>
    <location>
        <position position="66"/>
    </location>
</feature>
<feature type="mutagenesis site" description="About 1000-fold increase in binding affinity of S.clavuligerus beta-lactamase inhibitory protein BLIP." evidence="7 12">
    <original>D</original>
    <variation>E</variation>
    <location>
        <position position="97"/>
    </location>
</feature>
<feature type="mutagenesis site" description="About 2-fold increase in binding affinity of S.clavuligerus beta-lactamase inhibitory protein BLIP." evidence="7">
    <original>D</original>
    <variation>K</variation>
    <location>
        <position position="97"/>
    </location>
</feature>
<feature type="mutagenesis site" description="Reduces resistance to ampicillin about 100-fold in DH10B E.coli strain." evidence="14">
    <original>Y</original>
    <variation>A</variation>
    <variation>C</variation>
    <location>
        <position position="101"/>
    </location>
</feature>
<feature type="mutagenesis site" description="Reduces resistance to ampicillin about 16-fold in DH10B E.coli strain." evidence="14">
    <original>Y</original>
    <variation>D</variation>
    <variation>E</variation>
    <variation>I</variation>
    <variation>R</variation>
    <variation>T</variation>
    <location>
        <position position="101"/>
    </location>
</feature>
<feature type="mutagenesis site" description="Reduces catalytic efficiency toward ampicillin." evidence="14">
    <original>Y</original>
    <variation>E</variation>
    <location>
        <position position="101"/>
    </location>
</feature>
<feature type="mutagenesis site" description="Resistance to ampicillin unchanged in DH10B E.coli strain." evidence="14">
    <original>Y</original>
    <variation>F</variation>
    <location>
        <position position="101"/>
    </location>
</feature>
<feature type="mutagenesis site" description="Reduces resistance to ampicillin about 30-fold in DH10B E.coli strain." evidence="14">
    <original>Y</original>
    <variation>G</variation>
    <variation>K</variation>
    <variation>N</variation>
    <variation>V</variation>
    <location>
        <position position="101"/>
    </location>
</feature>
<feature type="mutagenesis site" description="Reduces resistance to ampicillin about 60-fold in DH10B E.coli strain." evidence="14">
    <original>Y</original>
    <variation>H</variation>
    <variation>Q</variation>
    <location>
        <position position="101"/>
    </location>
</feature>
<feature type="mutagenesis site" description="Reduces resistance to ampicillin about 500-fold in DH10B E.coli strain." evidence="14">
    <original>Y</original>
    <variation>L</variation>
    <location>
        <position position="101"/>
    </location>
</feature>
<feature type="mutagenesis site" description="Reduces resistance to ampicillin about 8-fold in DH10B E.coli strain." evidence="14">
    <original>Y</original>
    <variation>M</variation>
    <variation>S</variation>
    <location>
        <position position="101"/>
    </location>
</feature>
<feature type="mutagenesis site" description="Reduces resistance to ampicillin about 4-fold in DH10B E.coli strain." evidence="14">
    <original>Y</original>
    <variation>P</variation>
    <location>
        <position position="101"/>
    </location>
</feature>
<feature type="mutagenesis site" description="Reduces resistance to ampicillin about 2-fold in DH10B E.coli strain." evidence="14">
    <original>Y</original>
    <variation>W</variation>
    <location>
        <position position="101"/>
    </location>
</feature>
<feature type="mutagenesis site" description="Reduces resistance to piperacillin about 8-fold in DH10B E.coli strain. Decreases resistance to combined piperacillin and tazobactam between 4- and 16-fold in DH10B E.coli strain. Increases resistance to combined piperacillin and inhibitor LN-1-255 about 2-fold in DH10B E.coli strain." evidence="9 16">
    <original>S</original>
    <variation>G</variation>
    <location>
        <position position="126"/>
    </location>
</feature>
<feature type="mutagenesis site" description="Reduces resistance to piperacillin about 2-fold in DH10B E.coli strain. Decreases resistance to combined piperacillin and tazobactam about 500-fold in DH10B E.coli strain. About 7-fold increase in binding affinity of inhibitor SA2-13; about 2-fold increase in binding affinity of inhibitor tazobactam." evidence="13 16">
    <original>R</original>
    <variation>H</variation>
    <location>
        <position position="160"/>
    </location>
</feature>
<feature type="mutagenesis site" description="Reduces resistance to piperacillin about 60-fold in DH10B E.coli strain. Decreases resistance to combined piperacillin and tazobactam about 1000-fold in DH10B E.coli strain. About 3-fold increase in binding affinity of inhibitor SA2-13; about 2-fold increase in binding affinity of inhibitor tazobactam." evidence="13">
    <original>R</original>
    <variation>S</variation>
    <location>
        <position position="160"/>
    </location>
</feature>
<feature type="mutagenesis site" description="Reduces resistance to piperacillin about 16-fold in DH10B E.coli strain. Decreases resistance to combined piperacillin and tazobactam about 1000-fold in DH10B E.coli strain." evidence="16">
    <original>D</original>
    <variation>N</variation>
    <location>
        <position position="175"/>
    </location>
</feature>
<feature type="mutagenesis site" description="Reduces resistance to penicillins about 500-fold in DH10B E.coli strain; reduces resistance to cephalothin about 30-fold in DH10B E.coli strain." evidence="17">
    <original>K</original>
    <variation>A</variation>
    <location>
        <position position="230"/>
    </location>
</feature>
<feature type="mutagenesis site" description="Almost abolishes resistance to penicillins or cephalothin in DH10B E.coli strain." evidence="17">
    <original>K</original>
    <variation>C</variation>
    <variation>D</variation>
    <variation>E</variation>
    <variation>F</variation>
    <variation>G</variation>
    <variation>H</variation>
    <variation>I</variation>
    <variation>L</variation>
    <variation>M</variation>
    <variation>N</variation>
    <variation>P</variation>
    <variation>Q</variation>
    <variation>S</variation>
    <variation>T</variation>
    <variation>V</variation>
    <variation>W</variation>
    <variation>Y</variation>
    <location>
        <position position="230"/>
    </location>
</feature>
<feature type="mutagenesis site" description="Resistance to penicillins almost unaffected in DH10B E.coli strain; reduces resistance to cephalothin about 16-fold in DH10B E.coli strain. Increases resistance to combined ampicillin and clavulanic acid 4-fold in DH10B E.coli strain. Reduces binding affinity for clavulanic acid, tazobactam and sulbactam about 6-fold, 2-fold, and 3-fold, respectively." evidence="17">
    <original>K</original>
    <variation>R</variation>
    <location>
        <position position="230"/>
    </location>
</feature>
<feature type="mutagenesis site" description="Reduces resistance to penicillins about 60-fold and to cephalothin about 120-fold in DH10B E.coli strain. Decreases resistance to combined ampicillin and clavulanic acid about 8-fold in DH10B E.coli strain." evidence="10">
    <original>N</original>
    <variation>A</variation>
    <variation>L</variation>
    <variation>I</variation>
    <location>
        <position position="270"/>
    </location>
</feature>
<feature type="mutagenesis site" description="Reduces resistance to penicillins about 2-fold and to cephalothin about 8-fold, in DH10B E.coli strain. Increases resistance to combined ampicillin and clavulanic acid 4-fold in DH10B strain. Slightly reduces catalytic efficiency with respect to penicillins, cephalothin and nitrocefin. Reduces inhibition by clavulanic acid about 5-fold. Reduces binding affinity for meropenem about 40-fold." evidence="10">
    <original>N</original>
    <variation>D</variation>
    <location>
        <position position="270"/>
    </location>
</feature>
<feature type="mutagenesis site" description="Reduces resistance to penicillins about 4-fold and to cephalothin about 8-fold in DH10B E.coli strain. No effect on resistance to combined ampicillin and clavulanic acid in DH10B E.coli strain." evidence="10">
    <original>N</original>
    <variation>G</variation>
    <variation>S</variation>
    <location>
        <position position="270"/>
    </location>
</feature>
<feature type="mutagenesis site" description="Reduces resistance to penicillins about 250-fold and to cephalothin about 250-fold in DH10B E.coli strain. Decreases resistance to combined ampicillin and clavulanic acid about 16-fold in DH10B E.coli strain." evidence="10">
    <original>N</original>
    <variation>K</variation>
    <variation>R</variation>
    <variation>Y</variation>
    <variation>F</variation>
    <location>
        <position position="270"/>
    </location>
</feature>
<feature type="mutagenesis site" description="Reduces resistance to penicillins about 1000-fold and cephalothin about 500-fold in DH10B E.coli strain. Abolishes resistance to combined ampicillin and clavulanic acid in DH10B E.coli strain." evidence="10">
    <original>N</original>
    <variation>M</variation>
    <variation>P</variation>
    <variation>W</variation>
    <location>
        <position position="270"/>
    </location>
</feature>
<feature type="mutagenesis site" description="Reduces resistance to penicillins about 8-fold and to cephalothin about 8-fold in DH10B E.coli strain. Decreases resistance to combined ampicillin and clavulanic acid about 2-fold in DH10B E.coli strain." evidence="10">
    <original>N</original>
    <variation>V</variation>
    <variation>Q</variation>
    <variation>E</variation>
    <variation>C</variation>
    <variation>T</variation>
    <variation>H</variation>
    <location>
        <position position="270"/>
    </location>
</feature>
<feature type="sequence conflict" description="In Ref. 1; AAA26087." evidence="23" ref="1">
    <original>G</original>
    <variation>A</variation>
    <location>
        <position position="112"/>
    </location>
</feature>
<feature type="sequence conflict" description="In Ref. 1; AAA26087." evidence="23" ref="1">
    <original>KL</original>
    <variation>NVG</variation>
    <location>
        <begin position="188"/>
        <end position="189"/>
    </location>
</feature>
<feature type="sequence conflict" description="In Ref. 1; AAA26087." evidence="23" ref="1">
    <original>A</original>
    <variation>K</variation>
    <location>
        <position position="278"/>
    </location>
</feature>
<feature type="sequence conflict" description="In Ref. 1; AAA26087." evidence="23" ref="1">
    <original>I</original>
    <variation>Y</variation>
    <location>
        <position position="281"/>
    </location>
</feature>
<feature type="helix" evidence="68">
    <location>
        <begin position="25"/>
        <end position="36"/>
    </location>
</feature>
<feature type="strand" evidence="68">
    <location>
        <begin position="38"/>
        <end position="46"/>
    </location>
</feature>
<feature type="turn" evidence="68">
    <location>
        <begin position="47"/>
        <end position="49"/>
    </location>
</feature>
<feature type="strand" evidence="68">
    <location>
        <begin position="52"/>
        <end position="57"/>
    </location>
</feature>
<feature type="helix" evidence="68">
    <location>
        <begin position="65"/>
        <end position="67"/>
    </location>
</feature>
<feature type="helix" evidence="68">
    <location>
        <begin position="68"/>
        <end position="81"/>
    </location>
</feature>
<feature type="helix" evidence="68">
    <location>
        <begin position="95"/>
        <end position="97"/>
    </location>
</feature>
<feature type="helix" evidence="68">
    <location>
        <begin position="105"/>
        <end position="108"/>
    </location>
</feature>
<feature type="turn" evidence="68">
    <location>
        <begin position="109"/>
        <end position="111"/>
    </location>
</feature>
<feature type="helix" evidence="68">
    <location>
        <begin position="115"/>
        <end position="125"/>
    </location>
</feature>
<feature type="helix" evidence="68">
    <location>
        <begin position="128"/>
        <end position="137"/>
    </location>
</feature>
<feature type="helix" evidence="68">
    <location>
        <begin position="140"/>
        <end position="150"/>
    </location>
</feature>
<feature type="helix" evidence="68">
    <location>
        <begin position="164"/>
        <end position="166"/>
    </location>
</feature>
<feature type="helix" evidence="68">
    <location>
        <begin position="179"/>
        <end position="191"/>
    </location>
</feature>
<feature type="strand" evidence="68">
    <location>
        <begin position="192"/>
        <end position="195"/>
    </location>
</feature>
<feature type="helix" evidence="68">
    <location>
        <begin position="197"/>
        <end position="208"/>
    </location>
</feature>
<feature type="strand" evidence="68">
    <location>
        <begin position="211"/>
        <end position="213"/>
    </location>
</feature>
<feature type="helix" evidence="68">
    <location>
        <begin position="214"/>
        <end position="220"/>
    </location>
</feature>
<feature type="strand" evidence="68">
    <location>
        <begin position="226"/>
        <end position="233"/>
    </location>
</feature>
<feature type="helix" evidence="68">
    <location>
        <begin position="235"/>
        <end position="237"/>
    </location>
</feature>
<feature type="strand" evidence="68">
    <location>
        <begin position="239"/>
        <end position="247"/>
    </location>
</feature>
<feature type="strand" evidence="68">
    <location>
        <begin position="253"/>
        <end position="261"/>
    </location>
</feature>
<feature type="helix" evidence="68">
    <location>
        <begin position="266"/>
        <end position="282"/>
    </location>
</feature>
<feature type="turn" evidence="69">
    <location>
        <begin position="283"/>
        <end position="285"/>
    </location>
</feature>
<keyword id="KW-0002">3D-structure</keyword>
<keyword id="KW-0046">Antibiotic resistance</keyword>
<keyword id="KW-1015">Disulfide bond</keyword>
<keyword id="KW-0378">Hydrolase</keyword>
<keyword id="KW-0614">Plasmid</keyword>
<keyword id="KW-0732">Signal</keyword>
<sequence>MRYIRLCIISLLATLPLAVHASPQPLEQIKLSESQLSGRVGMIEMDLASGRTLTAWRADERFPMMSTFKVVLCGAVLARVDAGDEQLERKIHYRQQDLVDYSPVSEKHLADGMTVGELCAAAITMSDNSAANLLLATVGGPAGLTAFLRQIGDNVTRLDRWETELNEALPGDARDTTTPASMAATLRKLLTSQRLSARSQRQLLQWMVDDRVAGPLIRSVLPAGWFIADKTGAGERGARGIVALLGPNNKAERIVVIYLRDTPASMAERNQQIAGIGAALIEHWQR</sequence>
<geneLocation type="plasmid">
    <name>R974</name>
</geneLocation>
<comment type="function">
    <text evidence="4 5 9 10 14 16 17">Broad-spectrum beta-lactamase which confers resistance to penicillins, as well as first- and third-generation cephalosporins (PubMed:10639363, PubMed:18955486, PubMed:19351161, PubMed:22908166, PubMed:23145056, PubMed:23252553). Has nitrocefin-hydrolyzing activity (PubMed:10231522, PubMed:19351161, PubMed:23252553). Inactive against the cephalosporins, cefotaxime and cefoxitin, and the carbapenem, meropenem (PubMed:10639363, PubMed:19351161).</text>
</comment>
<comment type="catalytic activity">
    <reaction evidence="3 4 10 14 17">
        <text>a beta-lactam + H2O = a substituted beta-amino acid</text>
        <dbReference type="Rhea" id="RHEA:20401"/>
        <dbReference type="ChEBI" id="CHEBI:15377"/>
        <dbReference type="ChEBI" id="CHEBI:35627"/>
        <dbReference type="ChEBI" id="CHEBI:140347"/>
        <dbReference type="EC" id="3.5.2.6"/>
    </reaction>
</comment>
<comment type="activity regulation">
    <text evidence="6 9 10 14 15 16 17 18 19">Inhibited by the beta-lactamase-blocking agents clavulanic acid, sulbactam, avibactam or tazobactam, or SA1-204 or LN1-255 via a covalent binding to Ser-66 (PubMed:11327849, PubMed:18955486, PubMed:19351161, PubMed:22908166, PubMed:22974281, PubMed:23145056, PubMed:23252553, PubMed:24219313, PubMed:26340563). Inhibitors SA1-204 and LN1-255 may be approximately 16-fold more effective than tazobactam (PubMed:23145056). May also be inhibited by tazobactam via a covalent binding to Ser-126 (PubMed:11327849).</text>
</comment>
<comment type="biophysicochemical properties">
    <kinetics>
        <KM evidence="10">183 uM for ampicillin (at pH 7.4 and 25 degrees Celsius)</KM>
        <KM evidence="10">77 uM for piperacillin (at pH 7.4 and 25 degrees Celsius)</KM>
        <KM evidence="17">75 uM for piperacillin (at pH 7.4)</KM>
        <KM evidence="10">21 uM for nitrocefin (at pH 7.4 and 25 degrees Celsius)</KM>
        <KM evidence="17">25 uM for nitrocefin (at pH 7.4)</KM>
        <KM evidence="10">29 uM for cephalothin (at pH 7.4 and 25 degrees Celsius)</KM>
        <KM evidence="17">49 uM for cephalothin (at pH 7.4)</KM>
        <text evidence="10 17">kcat is 3100 sec(-1) with ampicillin as substrate (at pH 7.4 and 25 degrees Celsius) (PubMed:19351161). kcat is 898 sec(-1) with piperacillin as substrate (at pH 7.4 and 25 degrees Celsius) (PubMed:19351161). kcat is 1179 sec(-1) with piperacillin as substrate (at pH 7.4) (PubMed:23252553). kcat is 237 sec(-1) with nitrocefin as substrate (at pH 7.4 and 25 degrees Celsius) (PubMed:19351161). kcat is 348 sec(-1) with nitrocefin as substrate (at pH 7.4) (PubMed:23252553). kcat is 14 sec(-1) with cephalothin as substrate (at pH 7.4 and 25 degrees Celsius) (PubMed:19351161). kcat is 43 sec(-1) with nitrocefin as substrate (at pH 7.4) (PubMed:23252553).</text>
    </kinetics>
</comment>
<comment type="subunit">
    <text evidence="7 8 12">Interacts with S.clavuligerus beta-lactamase inhibitor protein BLIP.</text>
</comment>
<comment type="induction">
    <text evidence="5">Increased expression in clinical isolate strain 15571, in concert with reduced expression of a 45-kDa outer membrane protein, confers increased resistance to ceftazidime.</text>
</comment>
<comment type="miscellaneous">
    <text evidence="11">The class A beta-lactamase family has a specific amino-acid numbering system, sometimes called Ambler or ABL numbering and often misspelt as Amber (PubMed:2039479). A multiple sequence alignment was used to derive a consensus sequence and then the consensus was numbered taking into account insertions and deletions (PubMed:2039479). This allows use of identical numbers, e.g. for active site residues, despite differences in protein length (PubMed:2039479). UniProt always uses natural numbering of residues, hence there appear to be differences in numbering between this entry and some papers (PubMed:2039479).</text>
</comment>
<comment type="similarity">
    <text evidence="23">Belongs to the class-A beta-lactamase family.</text>
</comment>